<comment type="function">
    <text evidence="1">Redox regulated molecular chaperone. Protects both thermally unfolding and oxidatively damaged proteins from irreversible aggregation. Plays an important role in the bacterial defense system toward oxidative stress.</text>
</comment>
<comment type="subcellular location">
    <subcellularLocation>
        <location evidence="1">Cytoplasm</location>
    </subcellularLocation>
</comment>
<comment type="PTM">
    <text evidence="1">Under oxidizing conditions two disulfide bonds are formed involving the reactive cysteines. Under reducing conditions zinc is bound to the reactive cysteines and the protein is inactive.</text>
</comment>
<comment type="similarity">
    <text evidence="1">Belongs to the HSP33 family.</text>
</comment>
<sequence>MTDNTDNDKLYRYLFQDRAVRGEWVRLNQTFTDTLNTHQYPKVIQNLLGEMMVATSLLTATLKFEGDITVQVQGDGPLKLALVNGNHQQQIRALARLQADVSDDMSLAQLVGKGVLVITIAPTEGERYQGVIALDKPTITACLEDYFVRSEQLQTQLIIRAGEFEGQPVAAGMLLQIMPDGSGSPEDFEHLATLAATVKEEELFGLTAEELLYRLYHEERVEIFPSQPISFFCGCSQERSGAALLLISDEELDEVLAEHNGTIDMQCECCGTHYFFNKAAIMQLKVEK</sequence>
<protein>
    <recommendedName>
        <fullName evidence="1">33 kDa chaperonin</fullName>
    </recommendedName>
    <alternativeName>
        <fullName evidence="1">Heat shock protein 33 homolog</fullName>
        <shortName evidence="1">HSP33</shortName>
    </alternativeName>
</protein>
<accession>Q9CKQ9</accession>
<name>HSLO_PASMU</name>
<gene>
    <name evidence="1" type="primary">hslO</name>
    <name type="ordered locus">PM1547</name>
</gene>
<proteinExistence type="inferred from homology"/>
<reference key="1">
    <citation type="journal article" date="2001" name="Proc. Natl. Acad. Sci. U.S.A.">
        <title>Complete genomic sequence of Pasteurella multocida Pm70.</title>
        <authorList>
            <person name="May B.J."/>
            <person name="Zhang Q."/>
            <person name="Li L.L."/>
            <person name="Paustian M.L."/>
            <person name="Whittam T.S."/>
            <person name="Kapur V."/>
        </authorList>
    </citation>
    <scope>NUCLEOTIDE SEQUENCE [LARGE SCALE GENOMIC DNA]</scope>
    <source>
        <strain>Pm70</strain>
    </source>
</reference>
<organism>
    <name type="scientific">Pasteurella multocida (strain Pm70)</name>
    <dbReference type="NCBI Taxonomy" id="272843"/>
    <lineage>
        <taxon>Bacteria</taxon>
        <taxon>Pseudomonadati</taxon>
        <taxon>Pseudomonadota</taxon>
        <taxon>Gammaproteobacteria</taxon>
        <taxon>Pasteurellales</taxon>
        <taxon>Pasteurellaceae</taxon>
        <taxon>Pasteurella</taxon>
    </lineage>
</organism>
<keyword id="KW-0143">Chaperone</keyword>
<keyword id="KW-0963">Cytoplasm</keyword>
<keyword id="KW-1015">Disulfide bond</keyword>
<keyword id="KW-0676">Redox-active center</keyword>
<keyword id="KW-1185">Reference proteome</keyword>
<keyword id="KW-0862">Zinc</keyword>
<evidence type="ECO:0000255" key="1">
    <source>
        <dbReference type="HAMAP-Rule" id="MF_00117"/>
    </source>
</evidence>
<dbReference type="EMBL" id="AE004439">
    <property type="protein sequence ID" value="AAK03631.1"/>
    <property type="molecule type" value="Genomic_DNA"/>
</dbReference>
<dbReference type="RefSeq" id="WP_005718232.1">
    <property type="nucleotide sequence ID" value="NC_002663.1"/>
</dbReference>
<dbReference type="SMR" id="Q9CKQ9"/>
<dbReference type="STRING" id="272843.PM1547"/>
<dbReference type="EnsemblBacteria" id="AAK03631">
    <property type="protein sequence ID" value="AAK03631"/>
    <property type="gene ID" value="PM1547"/>
</dbReference>
<dbReference type="GeneID" id="77206893"/>
<dbReference type="KEGG" id="pmu:PM1547"/>
<dbReference type="HOGENOM" id="CLU_054493_0_0_6"/>
<dbReference type="OrthoDB" id="9793753at2"/>
<dbReference type="Proteomes" id="UP000000809">
    <property type="component" value="Chromosome"/>
</dbReference>
<dbReference type="GO" id="GO:0005737">
    <property type="term" value="C:cytoplasm"/>
    <property type="evidence" value="ECO:0007669"/>
    <property type="project" value="UniProtKB-SubCell"/>
</dbReference>
<dbReference type="GO" id="GO:0044183">
    <property type="term" value="F:protein folding chaperone"/>
    <property type="evidence" value="ECO:0007669"/>
    <property type="project" value="TreeGrafter"/>
</dbReference>
<dbReference type="GO" id="GO:0051082">
    <property type="term" value="F:unfolded protein binding"/>
    <property type="evidence" value="ECO:0007669"/>
    <property type="project" value="UniProtKB-UniRule"/>
</dbReference>
<dbReference type="GO" id="GO:0042026">
    <property type="term" value="P:protein refolding"/>
    <property type="evidence" value="ECO:0007669"/>
    <property type="project" value="TreeGrafter"/>
</dbReference>
<dbReference type="CDD" id="cd00498">
    <property type="entry name" value="Hsp33"/>
    <property type="match status" value="1"/>
</dbReference>
<dbReference type="Gene3D" id="1.10.287.480">
    <property type="entry name" value="helix hairpin bin"/>
    <property type="match status" value="1"/>
</dbReference>
<dbReference type="Gene3D" id="3.55.30.10">
    <property type="entry name" value="Hsp33 domain"/>
    <property type="match status" value="1"/>
</dbReference>
<dbReference type="Gene3D" id="3.90.1280.10">
    <property type="entry name" value="HSP33 redox switch-like"/>
    <property type="match status" value="1"/>
</dbReference>
<dbReference type="HAMAP" id="MF_00117">
    <property type="entry name" value="HslO"/>
    <property type="match status" value="1"/>
</dbReference>
<dbReference type="InterPro" id="IPR000397">
    <property type="entry name" value="Heat_shock_Hsp33"/>
</dbReference>
<dbReference type="InterPro" id="IPR016154">
    <property type="entry name" value="Heat_shock_Hsp33_C"/>
</dbReference>
<dbReference type="InterPro" id="IPR016153">
    <property type="entry name" value="Heat_shock_Hsp33_N"/>
</dbReference>
<dbReference type="InterPro" id="IPR023212">
    <property type="entry name" value="Hsp33_helix_hairpin_bin_dom_sf"/>
</dbReference>
<dbReference type="NCBIfam" id="NF001033">
    <property type="entry name" value="PRK00114.1"/>
    <property type="match status" value="1"/>
</dbReference>
<dbReference type="PANTHER" id="PTHR30111">
    <property type="entry name" value="33 KDA CHAPERONIN"/>
    <property type="match status" value="1"/>
</dbReference>
<dbReference type="PANTHER" id="PTHR30111:SF1">
    <property type="entry name" value="33 KDA CHAPERONIN"/>
    <property type="match status" value="1"/>
</dbReference>
<dbReference type="Pfam" id="PF01430">
    <property type="entry name" value="HSP33"/>
    <property type="match status" value="1"/>
</dbReference>
<dbReference type="PIRSF" id="PIRSF005261">
    <property type="entry name" value="Heat_shock_Hsp33"/>
    <property type="match status" value="1"/>
</dbReference>
<dbReference type="SUPFAM" id="SSF64397">
    <property type="entry name" value="Hsp33 domain"/>
    <property type="match status" value="1"/>
</dbReference>
<dbReference type="SUPFAM" id="SSF118352">
    <property type="entry name" value="HSP33 redox switch-like"/>
    <property type="match status" value="1"/>
</dbReference>
<feature type="chain" id="PRO_0000192189" description="33 kDa chaperonin">
    <location>
        <begin position="1"/>
        <end position="288"/>
    </location>
</feature>
<feature type="disulfide bond" description="Redox-active" evidence="1">
    <location>
        <begin position="233"/>
        <end position="235"/>
    </location>
</feature>
<feature type="disulfide bond" description="Redox-active" evidence="1">
    <location>
        <begin position="267"/>
        <end position="270"/>
    </location>
</feature>